<proteinExistence type="evidence at protein level"/>
<evidence type="ECO:0000250" key="1">
    <source>
        <dbReference type="UniProtKB" id="Q8WWP7"/>
    </source>
</evidence>
<evidence type="ECO:0000255" key="2">
    <source>
        <dbReference type="PROSITE-ProRule" id="PRU01057"/>
    </source>
</evidence>
<evidence type="ECO:0000269" key="3">
    <source>
    </source>
</evidence>
<evidence type="ECO:0000269" key="4">
    <source>
    </source>
</evidence>
<evidence type="ECO:0000305" key="5"/>
<evidence type="ECO:0007744" key="6">
    <source>
        <dbReference type="PDB" id="2XTM"/>
    </source>
</evidence>
<evidence type="ECO:0007744" key="7">
    <source>
        <dbReference type="PDB" id="2XTN"/>
    </source>
</evidence>
<evidence type="ECO:0007744" key="8">
    <source>
        <dbReference type="PDB" id="2XTO"/>
    </source>
</evidence>
<evidence type="ECO:0007829" key="9">
    <source>
        <dbReference type="PDB" id="2XTP"/>
    </source>
</evidence>
<organism>
    <name type="scientific">Homo sapiens</name>
    <name type="common">Human</name>
    <dbReference type="NCBI Taxonomy" id="9606"/>
    <lineage>
        <taxon>Eukaryota</taxon>
        <taxon>Metazoa</taxon>
        <taxon>Chordata</taxon>
        <taxon>Craniata</taxon>
        <taxon>Vertebrata</taxon>
        <taxon>Euteleostomi</taxon>
        <taxon>Mammalia</taxon>
        <taxon>Eutheria</taxon>
        <taxon>Euarchontoglires</taxon>
        <taxon>Primates</taxon>
        <taxon>Haplorrhini</taxon>
        <taxon>Catarrhini</taxon>
        <taxon>Hominidae</taxon>
        <taxon>Homo</taxon>
    </lineage>
</organism>
<protein>
    <recommendedName>
        <fullName>GTPase IMAP family member 2</fullName>
    </recommendedName>
    <alternativeName>
        <fullName>Immunity-associated protein 2</fullName>
        <shortName>hIMAP2</shortName>
    </alternativeName>
</protein>
<sequence>MDQNEHSHWGPHAKGQCASRSELRIILVGKTGTGKSAAGNSILRKQAFESKLGSQTLTKTCSKSQGSWGNREIVIIDTPDMFSWKDHCEALYKEVQRCYLLSAPGPHVLLLVTQLGRYTSQDQQAAQRVKEIFGEDAMGHTIVLFTHKEDLNGGSLMDYMHDSDNKALSKLVAACGGRICAFNNRAEGSNQDDQVKELMDCIEDLLMEKNGDHYTNGLYSLIQRSKCGPVGSDERVKEFKQSLIKYMETQRSYTALAEANCLKGALIKTQLCVLFCIQLFLRLIILWLCILHSMCNLFCCLLFSMCNLFCSLLFIIPKKLMIFLRTVIRLERKTPRL</sequence>
<dbReference type="EMBL" id="AL110151">
    <property type="protein sequence ID" value="CAB53662.2"/>
    <property type="molecule type" value="mRNA"/>
</dbReference>
<dbReference type="EMBL" id="BC013934">
    <property type="protein sequence ID" value="AAH13934.1"/>
    <property type="molecule type" value="mRNA"/>
</dbReference>
<dbReference type="EMBL" id="BC032345">
    <property type="protein sequence ID" value="AAH32345.1"/>
    <property type="molecule type" value="mRNA"/>
</dbReference>
<dbReference type="CCDS" id="CCDS5905.1"/>
<dbReference type="PIR" id="T14742">
    <property type="entry name" value="T14742"/>
</dbReference>
<dbReference type="RefSeq" id="NP_056475.1">
    <property type="nucleotide sequence ID" value="NM_015660.3"/>
</dbReference>
<dbReference type="PDB" id="2XTM">
    <property type="method" value="X-ray"/>
    <property type="resolution" value="1.70 A"/>
    <property type="chains" value="A/B=1-234"/>
</dbReference>
<dbReference type="PDB" id="2XTN">
    <property type="method" value="X-ray"/>
    <property type="resolution" value="1.90 A"/>
    <property type="chains" value="A=1-234"/>
</dbReference>
<dbReference type="PDB" id="2XTO">
    <property type="method" value="X-ray"/>
    <property type="resolution" value="2.80 A"/>
    <property type="chains" value="A/B=21-260"/>
</dbReference>
<dbReference type="PDB" id="2XTP">
    <property type="method" value="X-ray"/>
    <property type="resolution" value="1.50 A"/>
    <property type="chains" value="A=1-260"/>
</dbReference>
<dbReference type="PDB" id="3P1J">
    <property type="method" value="X-ray"/>
    <property type="resolution" value="2.58 A"/>
    <property type="chains" value="A/B/C/D=19-226"/>
</dbReference>
<dbReference type="PDBsum" id="2XTM"/>
<dbReference type="PDBsum" id="2XTN"/>
<dbReference type="PDBsum" id="2XTO"/>
<dbReference type="PDBsum" id="2XTP"/>
<dbReference type="PDBsum" id="3P1J"/>
<dbReference type="SMR" id="Q9UG22"/>
<dbReference type="BioGRID" id="117588">
    <property type="interactions" value="9"/>
</dbReference>
<dbReference type="DIP" id="DIP-59483N"/>
<dbReference type="FunCoup" id="Q9UG22">
    <property type="interactions" value="22"/>
</dbReference>
<dbReference type="IntAct" id="Q9UG22">
    <property type="interactions" value="10"/>
</dbReference>
<dbReference type="STRING" id="9606.ENSP00000223293"/>
<dbReference type="iPTMnet" id="Q9UG22"/>
<dbReference type="PhosphoSitePlus" id="Q9UG22"/>
<dbReference type="SwissPalm" id="Q9UG22"/>
<dbReference type="BioMuta" id="GIMAP2"/>
<dbReference type="DMDM" id="38372396"/>
<dbReference type="jPOST" id="Q9UG22"/>
<dbReference type="MassIVE" id="Q9UG22"/>
<dbReference type="PaxDb" id="9606-ENSP00000223293"/>
<dbReference type="PeptideAtlas" id="Q9UG22"/>
<dbReference type="ProteomicsDB" id="84198"/>
<dbReference type="Antibodypedia" id="2832">
    <property type="antibodies" value="152 antibodies from 27 providers"/>
</dbReference>
<dbReference type="DNASU" id="26157"/>
<dbReference type="Ensembl" id="ENST00000223293.10">
    <property type="protein sequence ID" value="ENSP00000223293.5"/>
    <property type="gene ID" value="ENSG00000106560.11"/>
</dbReference>
<dbReference type="GeneID" id="26157"/>
<dbReference type="KEGG" id="hsa:26157"/>
<dbReference type="MANE-Select" id="ENST00000223293.10">
    <property type="protein sequence ID" value="ENSP00000223293.5"/>
    <property type="RefSeq nucleotide sequence ID" value="NM_015660.3"/>
    <property type="RefSeq protein sequence ID" value="NP_056475.1"/>
</dbReference>
<dbReference type="UCSC" id="uc003who.4">
    <property type="organism name" value="human"/>
</dbReference>
<dbReference type="AGR" id="HGNC:21789"/>
<dbReference type="CTD" id="26157"/>
<dbReference type="DisGeNET" id="26157"/>
<dbReference type="GeneCards" id="GIMAP2"/>
<dbReference type="HGNC" id="HGNC:21789">
    <property type="gene designation" value="GIMAP2"/>
</dbReference>
<dbReference type="HPA" id="ENSG00000106560">
    <property type="expression patterns" value="Tissue enhanced (lymphoid)"/>
</dbReference>
<dbReference type="MIM" id="608085">
    <property type="type" value="gene"/>
</dbReference>
<dbReference type="neXtProt" id="NX_Q9UG22"/>
<dbReference type="OpenTargets" id="ENSG00000106560"/>
<dbReference type="PharmGKB" id="PA134984698"/>
<dbReference type="VEuPathDB" id="HostDB:ENSG00000106560"/>
<dbReference type="eggNOG" id="ENOG502RB0C">
    <property type="taxonomic scope" value="Eukaryota"/>
</dbReference>
<dbReference type="GeneTree" id="ENSGT00940000163457"/>
<dbReference type="HOGENOM" id="CLU_010468_1_1_1"/>
<dbReference type="InParanoid" id="Q9UG22"/>
<dbReference type="OMA" id="GDHYTNE"/>
<dbReference type="OrthoDB" id="8954335at2759"/>
<dbReference type="PAN-GO" id="Q9UG22">
    <property type="GO annotations" value="1 GO annotation based on evolutionary models"/>
</dbReference>
<dbReference type="PhylomeDB" id="Q9UG22"/>
<dbReference type="TreeFam" id="TF330845"/>
<dbReference type="PathwayCommons" id="Q9UG22"/>
<dbReference type="SignaLink" id="Q9UG22"/>
<dbReference type="BioGRID-ORCS" id="26157">
    <property type="hits" value="11 hits in 1145 CRISPR screens"/>
</dbReference>
<dbReference type="ChiTaRS" id="GIMAP2">
    <property type="organism name" value="human"/>
</dbReference>
<dbReference type="EvolutionaryTrace" id="Q9UG22"/>
<dbReference type="GenomeRNAi" id="26157"/>
<dbReference type="Pharos" id="Q9UG22">
    <property type="development level" value="Tbio"/>
</dbReference>
<dbReference type="PRO" id="PR:Q9UG22"/>
<dbReference type="Proteomes" id="UP000005640">
    <property type="component" value="Chromosome 7"/>
</dbReference>
<dbReference type="RNAct" id="Q9UG22">
    <property type="molecule type" value="protein"/>
</dbReference>
<dbReference type="Bgee" id="ENSG00000106560">
    <property type="expression patterns" value="Expressed in leukocyte and 144 other cell types or tissues"/>
</dbReference>
<dbReference type="ExpressionAtlas" id="Q9UG22">
    <property type="expression patterns" value="baseline and differential"/>
</dbReference>
<dbReference type="GO" id="GO:0005783">
    <property type="term" value="C:endoplasmic reticulum"/>
    <property type="evidence" value="ECO:0000318"/>
    <property type="project" value="GO_Central"/>
</dbReference>
<dbReference type="GO" id="GO:0005811">
    <property type="term" value="C:lipid droplet"/>
    <property type="evidence" value="ECO:0000314"/>
    <property type="project" value="UniProtKB"/>
</dbReference>
<dbReference type="GO" id="GO:0005654">
    <property type="term" value="C:nucleoplasm"/>
    <property type="evidence" value="ECO:0000314"/>
    <property type="project" value="HPA"/>
</dbReference>
<dbReference type="GO" id="GO:0005525">
    <property type="term" value="F:GTP binding"/>
    <property type="evidence" value="ECO:0007669"/>
    <property type="project" value="UniProtKB-KW"/>
</dbReference>
<dbReference type="GO" id="GO:0042802">
    <property type="term" value="F:identical protein binding"/>
    <property type="evidence" value="ECO:0000353"/>
    <property type="project" value="IntAct"/>
</dbReference>
<dbReference type="CDD" id="cd01852">
    <property type="entry name" value="AIG1"/>
    <property type="match status" value="1"/>
</dbReference>
<dbReference type="FunFam" id="3.40.50.300:FF:000366">
    <property type="entry name" value="GTPase, IMAP family member 2"/>
    <property type="match status" value="1"/>
</dbReference>
<dbReference type="Gene3D" id="3.40.50.300">
    <property type="entry name" value="P-loop containing nucleotide triphosphate hydrolases"/>
    <property type="match status" value="1"/>
</dbReference>
<dbReference type="InterPro" id="IPR006703">
    <property type="entry name" value="G_AIG1"/>
</dbReference>
<dbReference type="InterPro" id="IPR045058">
    <property type="entry name" value="GIMA/IAN/Toc"/>
</dbReference>
<dbReference type="InterPro" id="IPR027417">
    <property type="entry name" value="P-loop_NTPase"/>
</dbReference>
<dbReference type="PANTHER" id="PTHR10903:SF7">
    <property type="entry name" value="GTPASE IMAP FAMILY MEMBER 2"/>
    <property type="match status" value="1"/>
</dbReference>
<dbReference type="PANTHER" id="PTHR10903">
    <property type="entry name" value="GTPASE, IMAP FAMILY MEMBER-RELATED"/>
    <property type="match status" value="1"/>
</dbReference>
<dbReference type="Pfam" id="PF04548">
    <property type="entry name" value="AIG1"/>
    <property type="match status" value="1"/>
</dbReference>
<dbReference type="SUPFAM" id="SSF52540">
    <property type="entry name" value="P-loop containing nucleoside triphosphate hydrolases"/>
    <property type="match status" value="1"/>
</dbReference>
<dbReference type="PROSITE" id="PS51720">
    <property type="entry name" value="G_AIG1"/>
    <property type="match status" value="1"/>
</dbReference>
<feature type="chain" id="PRO_0000190986" description="GTPase IMAP family member 2">
    <location>
        <begin position="1"/>
        <end position="337"/>
    </location>
</feature>
<feature type="domain" description="AIG1-type G" evidence="2">
    <location>
        <begin position="20"/>
        <end position="223"/>
    </location>
</feature>
<feature type="region of interest" description="G1" evidence="2">
    <location>
        <begin position="29"/>
        <end position="36"/>
    </location>
</feature>
<feature type="region of interest" description="G2" evidence="2">
    <location>
        <begin position="56"/>
        <end position="60"/>
    </location>
</feature>
<feature type="region of interest" description="G3" evidence="2">
    <location>
        <begin position="77"/>
        <end position="80"/>
    </location>
</feature>
<feature type="region of interest" description="G4" evidence="2">
    <location>
        <begin position="146"/>
        <end position="149"/>
    </location>
</feature>
<feature type="region of interest" description="G5" evidence="2">
    <location>
        <begin position="183"/>
        <end position="185"/>
    </location>
</feature>
<feature type="binding site" evidence="3 6 7 8">
    <location>
        <begin position="31"/>
        <end position="37"/>
    </location>
    <ligand>
        <name>GTP</name>
        <dbReference type="ChEBI" id="CHEBI:37565"/>
    </ligand>
</feature>
<feature type="binding site" evidence="3 7 8">
    <location>
        <position position="50"/>
    </location>
    <ligand>
        <name>GTP</name>
        <dbReference type="ChEBI" id="CHEBI:37565"/>
    </ligand>
</feature>
<feature type="binding site" evidence="3 7">
    <location>
        <begin position="57"/>
        <end position="58"/>
    </location>
    <ligand>
        <name>GTP</name>
        <dbReference type="ChEBI" id="CHEBI:37565"/>
    </ligand>
</feature>
<feature type="binding site" evidence="3 6 7 8">
    <location>
        <begin position="147"/>
        <end position="149"/>
    </location>
    <ligand>
        <name>GTP</name>
        <dbReference type="ChEBI" id="CHEBI:37565"/>
    </ligand>
</feature>
<feature type="binding site" evidence="3 6 7 8">
    <location>
        <position position="184"/>
    </location>
    <ligand>
        <name>GTP</name>
        <dbReference type="ChEBI" id="CHEBI:37565"/>
    </ligand>
</feature>
<feature type="binding site" evidence="1">
    <location>
        <begin position="318"/>
        <end position="320"/>
    </location>
    <ligand>
        <name>GTP</name>
        <dbReference type="ChEBI" id="CHEBI:37565"/>
    </ligand>
</feature>
<feature type="sequence variant" id="VAR_049531" description="In dbSNP:rs11558054.">
    <original>V</original>
    <variation>F</variation>
    <location>
        <position position="74"/>
    </location>
</feature>
<feature type="sequence variant" id="VAR_049532" description="In dbSNP:rs17173567.">
    <original>N</original>
    <variation>S</variation>
    <location>
        <position position="152"/>
    </location>
</feature>
<feature type="sequence variant" id="VAR_017305" description="In dbSNP:rs2075078.">
    <original>H</original>
    <variation>R</variation>
    <location>
        <position position="161"/>
    </location>
</feature>
<feature type="mutagenesis site" description="Abolishes GTP-induced dimerization." evidence="3">
    <original>S</original>
    <variation>A</variation>
    <location>
        <position position="54"/>
    </location>
</feature>
<feature type="mutagenesis site" description="Abolishes GTP-induced dimerization." evidence="3">
    <original>R</original>
    <variation>D</variation>
    <location>
        <position position="117"/>
    </location>
</feature>
<feature type="strand" evidence="9">
    <location>
        <begin position="23"/>
        <end position="29"/>
    </location>
</feature>
<feature type="helix" evidence="9">
    <location>
        <begin position="35"/>
        <end position="43"/>
    </location>
</feature>
<feature type="strand" evidence="9">
    <location>
        <begin position="62"/>
        <end position="68"/>
    </location>
</feature>
<feature type="strand" evidence="9">
    <location>
        <begin position="71"/>
        <end position="77"/>
    </location>
</feature>
<feature type="helix" evidence="9">
    <location>
        <begin position="80"/>
        <end position="83"/>
    </location>
</feature>
<feature type="helix" evidence="9">
    <location>
        <begin position="89"/>
        <end position="102"/>
    </location>
</feature>
<feature type="strand" evidence="9">
    <location>
        <begin position="107"/>
        <end position="114"/>
    </location>
</feature>
<feature type="helix" evidence="9">
    <location>
        <begin position="120"/>
        <end position="133"/>
    </location>
</feature>
<feature type="helix" evidence="9">
    <location>
        <begin position="135"/>
        <end position="140"/>
    </location>
</feature>
<feature type="strand" evidence="9">
    <location>
        <begin position="141"/>
        <end position="146"/>
    </location>
</feature>
<feature type="helix" evidence="9">
    <location>
        <begin position="148"/>
        <end position="151"/>
    </location>
</feature>
<feature type="helix" evidence="9">
    <location>
        <begin position="156"/>
        <end position="162"/>
    </location>
</feature>
<feature type="helix" evidence="9">
    <location>
        <begin position="166"/>
        <end position="174"/>
    </location>
</feature>
<feature type="turn" evidence="9">
    <location>
        <begin position="175"/>
        <end position="177"/>
    </location>
</feature>
<feature type="strand" evidence="9">
    <location>
        <begin position="179"/>
        <end position="181"/>
    </location>
</feature>
<feature type="helix" evidence="9">
    <location>
        <begin position="188"/>
        <end position="208"/>
    </location>
</feature>
<feature type="turn" evidence="9">
    <location>
        <begin position="209"/>
        <end position="211"/>
    </location>
</feature>
<feature type="helix" evidence="9">
    <location>
        <begin position="217"/>
        <end position="221"/>
    </location>
</feature>
<feature type="helix" evidence="9">
    <location>
        <begin position="237"/>
        <end position="253"/>
    </location>
</feature>
<name>GIMA2_HUMAN</name>
<accession>Q9UG22</accession>
<accession>Q96L25</accession>
<keyword id="KW-0002">3D-structure</keyword>
<keyword id="KW-0342">GTP-binding</keyword>
<keyword id="KW-0551">Lipid droplet</keyword>
<keyword id="KW-0547">Nucleotide-binding</keyword>
<keyword id="KW-1267">Proteomics identification</keyword>
<keyword id="KW-1185">Reference proteome</keyword>
<gene>
    <name type="primary">GIMAP2</name>
    <name type="synonym">IMAP2</name>
</gene>
<reference key="1">
    <citation type="journal article" date="2007" name="BMC Genomics">
        <title>The full-ORF clone resource of the German cDNA consortium.</title>
        <authorList>
            <person name="Bechtel S."/>
            <person name="Rosenfelder H."/>
            <person name="Duda A."/>
            <person name="Schmidt C.P."/>
            <person name="Ernst U."/>
            <person name="Wellenreuther R."/>
            <person name="Mehrle A."/>
            <person name="Schuster C."/>
            <person name="Bahr A."/>
            <person name="Bloecker H."/>
            <person name="Heubner D."/>
            <person name="Hoerlein A."/>
            <person name="Michel G."/>
            <person name="Wedler H."/>
            <person name="Koehrer K."/>
            <person name="Ottenwaelder B."/>
            <person name="Poustka A."/>
            <person name="Wiemann S."/>
            <person name="Schupp I."/>
        </authorList>
    </citation>
    <scope>NUCLEOTIDE SEQUENCE [LARGE SCALE MRNA]</scope>
    <source>
        <tissue>Uterus</tissue>
    </source>
</reference>
<reference key="2">
    <citation type="journal article" date="2004" name="Genome Res.">
        <title>The status, quality, and expansion of the NIH full-length cDNA project: the Mammalian Gene Collection (MGC).</title>
        <authorList>
            <consortium name="The MGC Project Team"/>
        </authorList>
    </citation>
    <scope>NUCLEOTIDE SEQUENCE [LARGE SCALE MRNA]</scope>
    <source>
        <tissue>Lung</tissue>
        <tissue>Prostate</tissue>
    </source>
</reference>
<reference key="3">
    <citation type="journal article" date="2013" name="Structure">
        <title>Structural insights into the mechanism of GTPase activation in the GIMAP family.</title>
        <authorList>
            <person name="Schwefel D."/>
            <person name="Arasu B.S."/>
            <person name="Marino S.F."/>
            <person name="Lamprecht B."/>
            <person name="Kochert K."/>
            <person name="Rosenbaum E."/>
            <person name="Eichhorst J."/>
            <person name="Wiesner B."/>
            <person name="Behlke J."/>
            <person name="Rocks O."/>
            <person name="Mathas S."/>
            <person name="Daumke O."/>
        </authorList>
    </citation>
    <scope>INTERACTION WITH GIMAP7</scope>
    <scope>FUNCTION</scope>
    <scope>SUBCELLULAR LOCATION</scope>
    <scope>TISSUE SPECIFICITY</scope>
</reference>
<reference key="4">
    <citation type="journal article" date="2010" name="Proc. Natl. Acad. Sci. U.S.A.">
        <title>Structural basis of oligomerization in septin-like GTPase of immunity-associated protein 2 (GIMAP2).</title>
        <authorList>
            <person name="Schwefel D."/>
            <person name="Frohlich C."/>
            <person name="Eichhorst J."/>
            <person name="Wiesner B."/>
            <person name="Behlke J."/>
            <person name="Aravind L."/>
            <person name="Daumke O."/>
        </authorList>
    </citation>
    <scope>X-RAY CRYSTALLOGRAPHY (1.5 ANGSTROMS) OF 1-260 IN COMPLEXES WITH GDP AND GTP</scope>
    <scope>SUBUNIT</scope>
    <scope>SUBCELLULAR LOCATION</scope>
    <scope>MUTAGENESIS OF SER-54 AND ARG-117</scope>
</reference>
<comment type="function">
    <text evidence="4">The heterodimer formed by GIMAP2 and GIMAP7 has GTPase activity. In contrast, GIMAP2 has no GTPase activity by itself.</text>
</comment>
<comment type="subunit">
    <text evidence="3">Monomer in the presence of bound GDP and in the absence of bound nucleotide. Homodimer in the presence of bound GTP. Can form linear oligomers. Heterodimer with GIMAP7.</text>
</comment>
<comment type="interaction">
    <interactant intactId="EBI-15891037">
        <id>Q9UG22</id>
    </interactant>
    <interactant intactId="EBI-15891037">
        <id>Q9UG22</id>
        <label>GIMAP2</label>
    </interactant>
    <organismsDiffer>false</organismsDiffer>
    <experiments>4</experiments>
</comment>
<comment type="interaction">
    <interactant intactId="EBI-15891037">
        <id>Q9UG22</id>
    </interactant>
    <interactant intactId="EBI-16039011">
        <id>Q8NHV1</id>
        <label>GIMAP7</label>
    </interactant>
    <organismsDiffer>false</organismsDiffer>
    <experiments>2</experiments>
</comment>
<comment type="interaction">
    <interactant intactId="EBI-15891037">
        <id>Q9UG22</id>
    </interactant>
    <interactant intactId="EBI-466029">
        <id>P42858</id>
        <label>HTT</label>
    </interactant>
    <organismsDiffer>false</organismsDiffer>
    <experiments>6</experiments>
</comment>
<comment type="subcellular location">
    <subcellularLocation>
        <location evidence="4">Lipid droplet</location>
    </subcellularLocation>
</comment>
<comment type="tissue specificity">
    <text evidence="4">Detected in T-cells.</text>
</comment>
<comment type="similarity">
    <text evidence="5">Belongs to the TRAFAC class TrmE-Era-EngA-EngB-Septin-like GTPase superfamily. AIG1/Toc34/Toc159-like paraseptin GTPase family. IAN subfamily.</text>
</comment>